<reference key="1">
    <citation type="journal article" date="2006" name="J. Bacteriol.">
        <title>The genome of the obligately intracellular bacterium Ehrlichia canis reveals themes of complex membrane structure and immune evasion strategies.</title>
        <authorList>
            <person name="Mavromatis K."/>
            <person name="Doyle C.K."/>
            <person name="Lykidis A."/>
            <person name="Ivanova N."/>
            <person name="Francino M.P."/>
            <person name="Chain P."/>
            <person name="Shin M."/>
            <person name="Malfatti S."/>
            <person name="Larimer F."/>
            <person name="Copeland A."/>
            <person name="Detter J.C."/>
            <person name="Land M."/>
            <person name="Richardson P.M."/>
            <person name="Yu X.J."/>
            <person name="Walker D.H."/>
            <person name="McBride J.W."/>
            <person name="Kyrpides N.C."/>
        </authorList>
    </citation>
    <scope>NUCLEOTIDE SEQUENCE [LARGE SCALE GENOMIC DNA]</scope>
    <source>
        <strain>Jake</strain>
    </source>
</reference>
<sequence length="423" mass="48480">MHDVDFIKRNPELFDYAMQNRNYEKVAQKIIELDIKKKQLLTQLYSLQKERNQITREIEKLKKDGVKCDTQIESSKNITEKINDINNMIKEDSQLIDLLNVLPNVPDDIVPVGKDESSNVEIRKHGYKRNFDFQVKTHYELGEKLNLMDFKQAAKLSGSRFVILKNQLAQLDRALANFMLDIHTKEFGYSEISHPILVHESAMYGVGQLPKFADDSFKTTENFRLVPTSEVALTNLVSGMNINSCDLPIRLTACSPCFRLEAGSAGKDTRGMMRQHQFNKVELVSIVTEEQSASELERMVQVAEEVLKRLELPYRVMMLCTGDMGFSASITYDIEVWVPSQNRYREISSCSNCKDFQARRMNTKYTTITNNVKVSKFAHTLNGSALAIGRTIIAILENYQNMDGSITIPLALRKYMNDQEFIK</sequence>
<gene>
    <name evidence="1" type="primary">serS</name>
    <name type="ordered locus">Ecaj_0454</name>
</gene>
<keyword id="KW-0030">Aminoacyl-tRNA synthetase</keyword>
<keyword id="KW-0067">ATP-binding</keyword>
<keyword id="KW-0963">Cytoplasm</keyword>
<keyword id="KW-0436">Ligase</keyword>
<keyword id="KW-0547">Nucleotide-binding</keyword>
<keyword id="KW-0648">Protein biosynthesis</keyword>
<protein>
    <recommendedName>
        <fullName evidence="1">Serine--tRNA ligase</fullName>
        <ecNumber evidence="1">6.1.1.11</ecNumber>
    </recommendedName>
    <alternativeName>
        <fullName evidence="1">Seryl-tRNA synthetase</fullName>
        <shortName evidence="1">SerRS</shortName>
    </alternativeName>
    <alternativeName>
        <fullName evidence="1">Seryl-tRNA(Ser/Sec) synthetase</fullName>
    </alternativeName>
</protein>
<comment type="function">
    <text evidence="1">Catalyzes the attachment of serine to tRNA(Ser). Is also able to aminoacylate tRNA(Sec) with serine, to form the misacylated tRNA L-seryl-tRNA(Sec), which will be further converted into selenocysteinyl-tRNA(Sec).</text>
</comment>
<comment type="catalytic activity">
    <reaction evidence="1">
        <text>tRNA(Ser) + L-serine + ATP = L-seryl-tRNA(Ser) + AMP + diphosphate + H(+)</text>
        <dbReference type="Rhea" id="RHEA:12292"/>
        <dbReference type="Rhea" id="RHEA-COMP:9669"/>
        <dbReference type="Rhea" id="RHEA-COMP:9703"/>
        <dbReference type="ChEBI" id="CHEBI:15378"/>
        <dbReference type="ChEBI" id="CHEBI:30616"/>
        <dbReference type="ChEBI" id="CHEBI:33019"/>
        <dbReference type="ChEBI" id="CHEBI:33384"/>
        <dbReference type="ChEBI" id="CHEBI:78442"/>
        <dbReference type="ChEBI" id="CHEBI:78533"/>
        <dbReference type="ChEBI" id="CHEBI:456215"/>
        <dbReference type="EC" id="6.1.1.11"/>
    </reaction>
</comment>
<comment type="catalytic activity">
    <reaction evidence="1">
        <text>tRNA(Sec) + L-serine + ATP = L-seryl-tRNA(Sec) + AMP + diphosphate + H(+)</text>
        <dbReference type="Rhea" id="RHEA:42580"/>
        <dbReference type="Rhea" id="RHEA-COMP:9742"/>
        <dbReference type="Rhea" id="RHEA-COMP:10128"/>
        <dbReference type="ChEBI" id="CHEBI:15378"/>
        <dbReference type="ChEBI" id="CHEBI:30616"/>
        <dbReference type="ChEBI" id="CHEBI:33019"/>
        <dbReference type="ChEBI" id="CHEBI:33384"/>
        <dbReference type="ChEBI" id="CHEBI:78442"/>
        <dbReference type="ChEBI" id="CHEBI:78533"/>
        <dbReference type="ChEBI" id="CHEBI:456215"/>
        <dbReference type="EC" id="6.1.1.11"/>
    </reaction>
</comment>
<comment type="pathway">
    <text evidence="1">Aminoacyl-tRNA biosynthesis; selenocysteinyl-tRNA(Sec) biosynthesis; L-seryl-tRNA(Sec) from L-serine and tRNA(Sec): step 1/1.</text>
</comment>
<comment type="subunit">
    <text evidence="1">Homodimer. The tRNA molecule binds across the dimer.</text>
</comment>
<comment type="subcellular location">
    <subcellularLocation>
        <location evidence="1">Cytoplasm</location>
    </subcellularLocation>
</comment>
<comment type="domain">
    <text evidence="1">Consists of two distinct domains, a catalytic core and a N-terminal extension that is involved in tRNA binding.</text>
</comment>
<comment type="similarity">
    <text evidence="1">Belongs to the class-II aminoacyl-tRNA synthetase family. Type-1 seryl-tRNA synthetase subfamily.</text>
</comment>
<proteinExistence type="inferred from homology"/>
<dbReference type="EC" id="6.1.1.11" evidence="1"/>
<dbReference type="EMBL" id="CP000107">
    <property type="protein sequence ID" value="AAZ68491.1"/>
    <property type="molecule type" value="Genomic_DNA"/>
</dbReference>
<dbReference type="RefSeq" id="WP_011304569.1">
    <property type="nucleotide sequence ID" value="NC_007354.1"/>
</dbReference>
<dbReference type="SMR" id="Q3YS14"/>
<dbReference type="FunCoup" id="Q3YS14">
    <property type="interactions" value="325"/>
</dbReference>
<dbReference type="STRING" id="269484.Ecaj_0454"/>
<dbReference type="KEGG" id="ecn:Ecaj_0454"/>
<dbReference type="eggNOG" id="COG0172">
    <property type="taxonomic scope" value="Bacteria"/>
</dbReference>
<dbReference type="HOGENOM" id="CLU_023797_1_1_5"/>
<dbReference type="InParanoid" id="Q3YS14"/>
<dbReference type="UniPathway" id="UPA00906">
    <property type="reaction ID" value="UER00895"/>
</dbReference>
<dbReference type="Proteomes" id="UP000000435">
    <property type="component" value="Chromosome"/>
</dbReference>
<dbReference type="GO" id="GO:0005737">
    <property type="term" value="C:cytoplasm"/>
    <property type="evidence" value="ECO:0007669"/>
    <property type="project" value="UniProtKB-SubCell"/>
</dbReference>
<dbReference type="GO" id="GO:0005524">
    <property type="term" value="F:ATP binding"/>
    <property type="evidence" value="ECO:0007669"/>
    <property type="project" value="UniProtKB-UniRule"/>
</dbReference>
<dbReference type="GO" id="GO:0004828">
    <property type="term" value="F:serine-tRNA ligase activity"/>
    <property type="evidence" value="ECO:0007669"/>
    <property type="project" value="UniProtKB-UniRule"/>
</dbReference>
<dbReference type="GO" id="GO:0016260">
    <property type="term" value="P:selenocysteine biosynthetic process"/>
    <property type="evidence" value="ECO:0007669"/>
    <property type="project" value="UniProtKB-UniRule"/>
</dbReference>
<dbReference type="GO" id="GO:0006434">
    <property type="term" value="P:seryl-tRNA aminoacylation"/>
    <property type="evidence" value="ECO:0007669"/>
    <property type="project" value="UniProtKB-UniRule"/>
</dbReference>
<dbReference type="CDD" id="cd00770">
    <property type="entry name" value="SerRS_core"/>
    <property type="match status" value="1"/>
</dbReference>
<dbReference type="Gene3D" id="3.30.930.10">
    <property type="entry name" value="Bira Bifunctional Protein, Domain 2"/>
    <property type="match status" value="1"/>
</dbReference>
<dbReference type="Gene3D" id="1.10.287.40">
    <property type="entry name" value="Serine-tRNA synthetase, tRNA binding domain"/>
    <property type="match status" value="1"/>
</dbReference>
<dbReference type="HAMAP" id="MF_00176">
    <property type="entry name" value="Ser_tRNA_synth_type1"/>
    <property type="match status" value="1"/>
</dbReference>
<dbReference type="InterPro" id="IPR002314">
    <property type="entry name" value="aa-tRNA-synt_IIb"/>
</dbReference>
<dbReference type="InterPro" id="IPR006195">
    <property type="entry name" value="aa-tRNA-synth_II"/>
</dbReference>
<dbReference type="InterPro" id="IPR045864">
    <property type="entry name" value="aa-tRNA-synth_II/BPL/LPL"/>
</dbReference>
<dbReference type="InterPro" id="IPR002317">
    <property type="entry name" value="Ser-tRNA-ligase_type_1"/>
</dbReference>
<dbReference type="InterPro" id="IPR015866">
    <property type="entry name" value="Ser-tRNA-synth_1_N"/>
</dbReference>
<dbReference type="InterPro" id="IPR042103">
    <property type="entry name" value="SerRS_1_N_sf"/>
</dbReference>
<dbReference type="InterPro" id="IPR033729">
    <property type="entry name" value="SerRS_core"/>
</dbReference>
<dbReference type="InterPro" id="IPR010978">
    <property type="entry name" value="tRNA-bd_arm"/>
</dbReference>
<dbReference type="NCBIfam" id="TIGR00414">
    <property type="entry name" value="serS"/>
    <property type="match status" value="1"/>
</dbReference>
<dbReference type="PANTHER" id="PTHR43697:SF1">
    <property type="entry name" value="SERINE--TRNA LIGASE"/>
    <property type="match status" value="1"/>
</dbReference>
<dbReference type="PANTHER" id="PTHR43697">
    <property type="entry name" value="SERYL-TRNA SYNTHETASE"/>
    <property type="match status" value="1"/>
</dbReference>
<dbReference type="Pfam" id="PF02403">
    <property type="entry name" value="Seryl_tRNA_N"/>
    <property type="match status" value="1"/>
</dbReference>
<dbReference type="Pfam" id="PF00587">
    <property type="entry name" value="tRNA-synt_2b"/>
    <property type="match status" value="1"/>
</dbReference>
<dbReference type="PIRSF" id="PIRSF001529">
    <property type="entry name" value="Ser-tRNA-synth_IIa"/>
    <property type="match status" value="1"/>
</dbReference>
<dbReference type="PRINTS" id="PR00981">
    <property type="entry name" value="TRNASYNTHSER"/>
</dbReference>
<dbReference type="SUPFAM" id="SSF55681">
    <property type="entry name" value="Class II aaRS and biotin synthetases"/>
    <property type="match status" value="1"/>
</dbReference>
<dbReference type="SUPFAM" id="SSF46589">
    <property type="entry name" value="tRNA-binding arm"/>
    <property type="match status" value="1"/>
</dbReference>
<dbReference type="PROSITE" id="PS50862">
    <property type="entry name" value="AA_TRNA_LIGASE_II"/>
    <property type="match status" value="1"/>
</dbReference>
<feature type="chain" id="PRO_1000019676" description="Serine--tRNA ligase">
    <location>
        <begin position="1"/>
        <end position="423"/>
    </location>
</feature>
<feature type="binding site" evidence="1">
    <location>
        <begin position="228"/>
        <end position="230"/>
    </location>
    <ligand>
        <name>L-serine</name>
        <dbReference type="ChEBI" id="CHEBI:33384"/>
    </ligand>
</feature>
<feature type="binding site" evidence="1">
    <location>
        <begin position="259"/>
        <end position="261"/>
    </location>
    <ligand>
        <name>ATP</name>
        <dbReference type="ChEBI" id="CHEBI:30616"/>
    </ligand>
</feature>
<feature type="binding site" evidence="1">
    <location>
        <position position="282"/>
    </location>
    <ligand>
        <name>L-serine</name>
        <dbReference type="ChEBI" id="CHEBI:33384"/>
    </ligand>
</feature>
<feature type="binding site" evidence="1">
    <location>
        <begin position="346"/>
        <end position="349"/>
    </location>
    <ligand>
        <name>ATP</name>
        <dbReference type="ChEBI" id="CHEBI:30616"/>
    </ligand>
</feature>
<feature type="binding site" evidence="1">
    <location>
        <position position="384"/>
    </location>
    <ligand>
        <name>L-serine</name>
        <dbReference type="ChEBI" id="CHEBI:33384"/>
    </ligand>
</feature>
<evidence type="ECO:0000255" key="1">
    <source>
        <dbReference type="HAMAP-Rule" id="MF_00176"/>
    </source>
</evidence>
<accession>Q3YS14</accession>
<organism>
    <name type="scientific">Ehrlichia canis (strain Jake)</name>
    <dbReference type="NCBI Taxonomy" id="269484"/>
    <lineage>
        <taxon>Bacteria</taxon>
        <taxon>Pseudomonadati</taxon>
        <taxon>Pseudomonadota</taxon>
        <taxon>Alphaproteobacteria</taxon>
        <taxon>Rickettsiales</taxon>
        <taxon>Anaplasmataceae</taxon>
        <taxon>Ehrlichia</taxon>
    </lineage>
</organism>
<name>SYS_EHRCJ</name>